<keyword id="KW-0002">3D-structure</keyword>
<keyword id="KW-0028">Amino-acid biosynthesis</keyword>
<keyword id="KW-0057">Aromatic amino acid biosynthesis</keyword>
<keyword id="KW-0903">Direct protein sequencing</keyword>
<keyword id="KW-0456">Lyase</keyword>
<keyword id="KW-0663">Pyridoxal phosphate</keyword>
<keyword id="KW-1185">Reference proteome</keyword>
<keyword id="KW-0822">Tryptophan biosynthesis</keyword>
<comment type="function">
    <text>The beta subunit is responsible for the synthesis of L-tryptophan from indole and L-serine.</text>
</comment>
<comment type="catalytic activity">
    <reaction>
        <text>(1S,2R)-1-C-(indol-3-yl)glycerol 3-phosphate + L-serine = D-glyceraldehyde 3-phosphate + L-tryptophan + H2O</text>
        <dbReference type="Rhea" id="RHEA:10532"/>
        <dbReference type="ChEBI" id="CHEBI:15377"/>
        <dbReference type="ChEBI" id="CHEBI:33384"/>
        <dbReference type="ChEBI" id="CHEBI:57912"/>
        <dbReference type="ChEBI" id="CHEBI:58866"/>
        <dbReference type="ChEBI" id="CHEBI:59776"/>
        <dbReference type="EC" id="4.2.1.20"/>
    </reaction>
</comment>
<comment type="cofactor">
    <cofactor>
        <name>pyridoxal 5'-phosphate</name>
        <dbReference type="ChEBI" id="CHEBI:597326"/>
    </cofactor>
</comment>
<comment type="pathway">
    <text>Amino-acid biosynthesis; L-tryptophan biosynthesis; L-tryptophan from chorismate: step 5/5.</text>
</comment>
<comment type="subunit">
    <text>Tetramer of two alpha and two beta chains.</text>
</comment>
<comment type="interaction">
    <interactant intactId="EBI-1123130">
        <id>P0A879</id>
    </interactant>
    <interactant intactId="EBI-1123130">
        <id>P0A879</id>
        <label>trpB</label>
    </interactant>
    <organismsDiffer>false</organismsDiffer>
    <experiments>2</experiments>
</comment>
<comment type="similarity">
    <text evidence="4">Belongs to the TrpB family.</text>
</comment>
<sequence length="397" mass="42983">MTTLLNPYFGEFGGMYVPQILMPALRQLEEAFVSAQKDPEFQAQFNDLLKNYAGRPTALTKCQNITAGTNTTLYLKREDLLHGGAHKTNQVLGQALLAKRMGKTEIIAETGAGQHGVASALASALLGLKCRIYMGAKDVERQSPNVFRMRLMGAEVIPVHSGSATLKDACNEALRDWSGSYETAHYMLGTAAGPHPYPTIVREFQRMIGEETKAQILEREGRLPDAVIACVGGGSNAIGMFADFINETNVGLIGVEPGGHGIETGEHGAPLKHGRVGIYFGMKAPMMQTEDGQIEESYSISAGLDFPSVGPQHAYLNSTGRADYVSITDDEALEAFKTLCLHEGIIPALESSHALAHALKMMRENPDKEQLLVVNLSGRGDKDIFTVHDILKARGEI</sequence>
<protein>
    <recommendedName>
        <fullName>Tryptophan synthase beta chain</fullName>
        <ecNumber>4.2.1.20</ecNumber>
    </recommendedName>
</protein>
<proteinExistence type="evidence at protein level"/>
<accession>P0A879</accession>
<accession>P00932</accession>
<accession>P78146</accession>
<feature type="initiator methionine" description="Removed" evidence="2 3">
    <location>
        <position position="1"/>
    </location>
</feature>
<feature type="chain" id="PRO_0000098948" description="Tryptophan synthase beta chain">
    <location>
        <begin position="2"/>
        <end position="397"/>
    </location>
</feature>
<feature type="active site" description="Nucleophile" evidence="2">
    <location>
        <position position="62"/>
    </location>
</feature>
<feature type="active site" description="Proton donor" evidence="5">
    <location>
        <position position="86"/>
    </location>
</feature>
<feature type="modified residue" description="N6-(pyridoxal phosphate)lysine" evidence="1">
    <location>
        <position position="87"/>
    </location>
</feature>
<feature type="sequence variant" description="In mutant TRPB8.">
    <original>G</original>
    <variation>R</variation>
    <location>
        <position position="281"/>
    </location>
</feature>
<feature type="sequence conflict" description="In Ref. 7; AA sequence." evidence="4" ref="7">
    <original>E</original>
    <variation>K</variation>
    <location>
        <position position="78"/>
    </location>
</feature>
<feature type="sequence conflict" description="In Ref. 10; AA sequence." evidence="4" ref="10">
    <original>N</original>
    <variation>Z</variation>
    <location>
        <position position="365"/>
    </location>
</feature>
<feature type="sequence conflict" description="In Ref. 10; AA sequence." evidence="4" ref="10">
    <original>KE</original>
    <variation>BK</variation>
    <location>
        <begin position="368"/>
        <end position="369"/>
    </location>
</feature>
<feature type="helix" evidence="6">
    <location>
        <begin position="19"/>
        <end position="21"/>
    </location>
</feature>
<feature type="helix" evidence="6">
    <location>
        <begin position="22"/>
        <end position="37"/>
    </location>
</feature>
<feature type="helix" evidence="6">
    <location>
        <begin position="39"/>
        <end position="51"/>
    </location>
</feature>
<feature type="strand" evidence="6">
    <location>
        <begin position="59"/>
        <end position="61"/>
    </location>
</feature>
<feature type="helix" evidence="6">
    <location>
        <begin position="63"/>
        <end position="66"/>
    </location>
</feature>
<feature type="strand" evidence="6">
    <location>
        <begin position="69"/>
        <end position="77"/>
    </location>
</feature>
<feature type="helix" evidence="6">
    <location>
        <begin position="78"/>
        <end position="80"/>
    </location>
</feature>
<feature type="helix" evidence="6">
    <location>
        <begin position="87"/>
        <end position="100"/>
    </location>
</feature>
<feature type="strand" evidence="6">
    <location>
        <begin position="105"/>
        <end position="109"/>
    </location>
</feature>
<feature type="strand" evidence="6">
    <location>
        <begin position="111"/>
        <end position="113"/>
    </location>
</feature>
<feature type="helix" evidence="6">
    <location>
        <begin position="114"/>
        <end position="125"/>
    </location>
</feature>
<feature type="strand" evidence="6">
    <location>
        <begin position="129"/>
        <end position="135"/>
    </location>
</feature>
<feature type="helix" evidence="6">
    <location>
        <begin position="136"/>
        <end position="141"/>
    </location>
</feature>
<feature type="helix" evidence="6">
    <location>
        <begin position="143"/>
        <end position="151"/>
    </location>
</feature>
<feature type="strand" evidence="6">
    <location>
        <begin position="155"/>
        <end position="159"/>
    </location>
</feature>
<feature type="helix" evidence="6">
    <location>
        <begin position="166"/>
        <end position="180"/>
    </location>
</feature>
<feature type="turn" evidence="6">
    <location>
        <begin position="181"/>
        <end position="183"/>
    </location>
</feature>
<feature type="strand" evidence="6">
    <location>
        <begin position="184"/>
        <end position="186"/>
    </location>
</feature>
<feature type="strand" evidence="6">
    <location>
        <begin position="189"/>
        <end position="191"/>
    </location>
</feature>
<feature type="helix" evidence="6">
    <location>
        <begin position="197"/>
        <end position="205"/>
    </location>
</feature>
<feature type="helix" evidence="6">
    <location>
        <begin position="207"/>
        <end position="220"/>
    </location>
</feature>
<feature type="strand" evidence="6">
    <location>
        <begin position="225"/>
        <end position="230"/>
    </location>
</feature>
<feature type="strand" evidence="6">
    <location>
        <begin position="232"/>
        <end position="234"/>
    </location>
</feature>
<feature type="helix" evidence="6">
    <location>
        <begin position="235"/>
        <end position="241"/>
    </location>
</feature>
<feature type="helix" evidence="6">
    <location>
        <begin position="242"/>
        <end position="244"/>
    </location>
</feature>
<feature type="strand" evidence="6">
    <location>
        <begin position="245"/>
        <end position="247"/>
    </location>
</feature>
<feature type="strand" evidence="6">
    <location>
        <begin position="250"/>
        <end position="259"/>
    </location>
</feature>
<feature type="turn" evidence="6">
    <location>
        <begin position="262"/>
        <end position="264"/>
    </location>
</feature>
<feature type="helix" evidence="6">
    <location>
        <begin position="270"/>
        <end position="273"/>
    </location>
</feature>
<feature type="strand" evidence="6">
    <location>
        <begin position="274"/>
        <end position="279"/>
    </location>
</feature>
<feature type="strand" evidence="6">
    <location>
        <begin position="282"/>
        <end position="286"/>
    </location>
</feature>
<feature type="helix" evidence="6">
    <location>
        <begin position="311"/>
        <end position="318"/>
    </location>
</feature>
<feature type="strand" evidence="6">
    <location>
        <begin position="321"/>
        <end position="328"/>
    </location>
</feature>
<feature type="helix" evidence="6">
    <location>
        <begin position="329"/>
        <end position="343"/>
    </location>
</feature>
<feature type="helix" evidence="6">
    <location>
        <begin position="349"/>
        <end position="363"/>
    </location>
</feature>
<feature type="strand" evidence="6">
    <location>
        <begin position="370"/>
        <end position="376"/>
    </location>
</feature>
<feature type="strand" evidence="6">
    <location>
        <begin position="378"/>
        <end position="380"/>
    </location>
</feature>
<feature type="helix" evidence="6">
    <location>
        <begin position="381"/>
        <end position="383"/>
    </location>
</feature>
<feature type="helix" evidence="6">
    <location>
        <begin position="384"/>
        <end position="393"/>
    </location>
</feature>
<gene>
    <name type="primary">trpB</name>
    <name type="ordered locus">b1261</name>
    <name type="ordered locus">JW1253</name>
</gene>
<organism>
    <name type="scientific">Escherichia coli (strain K12)</name>
    <dbReference type="NCBI Taxonomy" id="83333"/>
    <lineage>
        <taxon>Bacteria</taxon>
        <taxon>Pseudomonadati</taxon>
        <taxon>Pseudomonadota</taxon>
        <taxon>Gammaproteobacteria</taxon>
        <taxon>Enterobacterales</taxon>
        <taxon>Enterobacteriaceae</taxon>
        <taxon>Escherichia</taxon>
    </lineage>
</organism>
<dbReference type="EC" id="4.2.1.20"/>
<dbReference type="EMBL" id="V00365">
    <property type="protein sequence ID" value="CAA23663.1"/>
    <property type="molecule type" value="Genomic_DNA"/>
</dbReference>
<dbReference type="EMBL" id="V00372">
    <property type="protein sequence ID" value="CAA23674.1"/>
    <property type="molecule type" value="Genomic_DNA"/>
</dbReference>
<dbReference type="EMBL" id="U00096">
    <property type="protein sequence ID" value="AAC74343.1"/>
    <property type="molecule type" value="Genomic_DNA"/>
</dbReference>
<dbReference type="EMBL" id="AP009048">
    <property type="protein sequence ID" value="BAA14793.2"/>
    <property type="molecule type" value="Genomic_DNA"/>
</dbReference>
<dbReference type="EMBL" id="J01714">
    <property type="protein sequence ID" value="AAA57300.1"/>
    <property type="molecule type" value="Genomic_DNA"/>
</dbReference>
<dbReference type="EMBL" id="U23489">
    <property type="protein sequence ID" value="AAB60034.1"/>
    <property type="molecule type" value="Genomic_DNA"/>
</dbReference>
<dbReference type="EMBL" id="U23490">
    <property type="protein sequence ID" value="AAA65139.1"/>
    <property type="molecule type" value="Genomic_DNA"/>
</dbReference>
<dbReference type="EMBL" id="U23492">
    <property type="protein sequence ID" value="AAA65151.1"/>
    <property type="molecule type" value="Genomic_DNA"/>
</dbReference>
<dbReference type="EMBL" id="U23493">
    <property type="protein sequence ID" value="AAA65157.1"/>
    <property type="molecule type" value="Genomic_DNA"/>
</dbReference>
<dbReference type="EMBL" id="U23500">
    <property type="protein sequence ID" value="AAA65175.1"/>
    <property type="molecule type" value="Genomic_DNA"/>
</dbReference>
<dbReference type="EMBL" id="U25417">
    <property type="protein sequence ID" value="AAA73790.1"/>
    <property type="molecule type" value="Genomic_DNA"/>
</dbReference>
<dbReference type="EMBL" id="U25418">
    <property type="protein sequence ID" value="AAA73796.1"/>
    <property type="molecule type" value="Genomic_DNA"/>
</dbReference>
<dbReference type="EMBL" id="U25419">
    <property type="protein sequence ID" value="AAA73802.1"/>
    <property type="molecule type" value="Genomic_DNA"/>
</dbReference>
<dbReference type="EMBL" id="U25422">
    <property type="protein sequence ID" value="AAA73820.1"/>
    <property type="molecule type" value="Genomic_DNA"/>
</dbReference>
<dbReference type="EMBL" id="U25423">
    <property type="protein sequence ID" value="AAA73826.1"/>
    <property type="molecule type" value="Genomic_DNA"/>
</dbReference>
<dbReference type="EMBL" id="U25426">
    <property type="protein sequence ID" value="AAA73838.1"/>
    <property type="molecule type" value="Genomic_DNA"/>
</dbReference>
<dbReference type="EMBL" id="U25427">
    <property type="protein sequence ID" value="AAA73844.1"/>
    <property type="molecule type" value="Genomic_DNA"/>
</dbReference>
<dbReference type="EMBL" id="U25428">
    <property type="protein sequence ID" value="AAA73850.1"/>
    <property type="molecule type" value="Genomic_DNA"/>
</dbReference>
<dbReference type="EMBL" id="U25429">
    <property type="protein sequence ID" value="AAA73856.1"/>
    <property type="molecule type" value="Genomic_DNA"/>
</dbReference>
<dbReference type="PIR" id="H64873">
    <property type="entry name" value="TSECB"/>
</dbReference>
<dbReference type="RefSeq" id="NP_415777.1">
    <property type="nucleotide sequence ID" value="NC_000913.3"/>
</dbReference>
<dbReference type="RefSeq" id="WP_000209520.1">
    <property type="nucleotide sequence ID" value="NZ_STEB01000005.1"/>
</dbReference>
<dbReference type="PDB" id="2DH5">
    <property type="method" value="X-ray"/>
    <property type="resolution" value="2.90 A"/>
    <property type="chains" value="A=1-397"/>
</dbReference>
<dbReference type="PDB" id="2DH6">
    <property type="method" value="X-ray"/>
    <property type="resolution" value="3.00 A"/>
    <property type="chains" value="A=1-397"/>
</dbReference>
<dbReference type="PDBsum" id="2DH5"/>
<dbReference type="PDBsum" id="2DH6"/>
<dbReference type="SMR" id="P0A879"/>
<dbReference type="BioGRID" id="4259543">
    <property type="interactions" value="55"/>
</dbReference>
<dbReference type="BioGRID" id="850135">
    <property type="interactions" value="1"/>
</dbReference>
<dbReference type="ComplexPortal" id="CPX-3446">
    <property type="entry name" value="TrpAB tryptophan synthase complex"/>
</dbReference>
<dbReference type="DIP" id="DIP-1036N"/>
<dbReference type="FunCoup" id="P0A879">
    <property type="interactions" value="813"/>
</dbReference>
<dbReference type="IntAct" id="P0A879">
    <property type="interactions" value="8"/>
</dbReference>
<dbReference type="MINT" id="P0A879"/>
<dbReference type="STRING" id="511145.b1261"/>
<dbReference type="BindingDB" id="P0A879"/>
<dbReference type="ChEMBL" id="CHEMBL3885646"/>
<dbReference type="jPOST" id="P0A879"/>
<dbReference type="PaxDb" id="511145-b1261"/>
<dbReference type="ABCD" id="P0A879">
    <property type="antibodies" value="1 sequenced antibody"/>
</dbReference>
<dbReference type="EnsemblBacteria" id="AAC74343">
    <property type="protein sequence ID" value="AAC74343"/>
    <property type="gene ID" value="b1261"/>
</dbReference>
<dbReference type="GeneID" id="75203373"/>
<dbReference type="GeneID" id="945768"/>
<dbReference type="KEGG" id="ecj:JW1253"/>
<dbReference type="KEGG" id="eco:b1261"/>
<dbReference type="KEGG" id="ecoc:C3026_07400"/>
<dbReference type="PATRIC" id="fig|1411691.4.peg.1022"/>
<dbReference type="EchoBASE" id="EB1018"/>
<dbReference type="eggNOG" id="COG0133">
    <property type="taxonomic scope" value="Bacteria"/>
</dbReference>
<dbReference type="InParanoid" id="P0A879"/>
<dbReference type="OMA" id="PLTLCQN"/>
<dbReference type="OrthoDB" id="9766131at2"/>
<dbReference type="PhylomeDB" id="P0A879"/>
<dbReference type="BioCyc" id="EcoCyc:TRYPSYN-BPROTEIN"/>
<dbReference type="BioCyc" id="MetaCyc:TRYPSYN-BPROTEIN"/>
<dbReference type="BRENDA" id="4.2.1.20">
    <property type="organism ID" value="2026"/>
</dbReference>
<dbReference type="SABIO-RK" id="P0A879"/>
<dbReference type="UniPathway" id="UPA00035">
    <property type="reaction ID" value="UER00044"/>
</dbReference>
<dbReference type="EvolutionaryTrace" id="P0A879"/>
<dbReference type="PRO" id="PR:P0A879"/>
<dbReference type="Proteomes" id="UP000000625">
    <property type="component" value="Chromosome"/>
</dbReference>
<dbReference type="GO" id="GO:0005737">
    <property type="term" value="C:cytoplasm"/>
    <property type="evidence" value="ECO:0000314"/>
    <property type="project" value="EcoliWiki"/>
</dbReference>
<dbReference type="GO" id="GO:0005829">
    <property type="term" value="C:cytosol"/>
    <property type="evidence" value="ECO:0000314"/>
    <property type="project" value="EcoCyc"/>
</dbReference>
<dbReference type="GO" id="GO:0042802">
    <property type="term" value="F:identical protein binding"/>
    <property type="evidence" value="ECO:0000353"/>
    <property type="project" value="IntAct"/>
</dbReference>
<dbReference type="GO" id="GO:0042803">
    <property type="term" value="F:protein homodimerization activity"/>
    <property type="evidence" value="ECO:0000314"/>
    <property type="project" value="EcoCyc"/>
</dbReference>
<dbReference type="GO" id="GO:0030170">
    <property type="term" value="F:pyridoxal phosphate binding"/>
    <property type="evidence" value="ECO:0000314"/>
    <property type="project" value="EcoliWiki"/>
</dbReference>
<dbReference type="GO" id="GO:0004834">
    <property type="term" value="F:tryptophan synthase activity"/>
    <property type="evidence" value="ECO:0000314"/>
    <property type="project" value="EcoCyc"/>
</dbReference>
<dbReference type="GO" id="GO:0009073">
    <property type="term" value="P:aromatic amino acid family biosynthetic process"/>
    <property type="evidence" value="ECO:0000315"/>
    <property type="project" value="EcoliWiki"/>
</dbReference>
<dbReference type="GO" id="GO:0000162">
    <property type="term" value="P:L-tryptophan biosynthetic process"/>
    <property type="evidence" value="ECO:0000314"/>
    <property type="project" value="ComplexPortal"/>
</dbReference>
<dbReference type="CDD" id="cd06446">
    <property type="entry name" value="Trp-synth_B"/>
    <property type="match status" value="1"/>
</dbReference>
<dbReference type="FunFam" id="3.40.50.1100:FF:000001">
    <property type="entry name" value="Tryptophan synthase beta chain"/>
    <property type="match status" value="1"/>
</dbReference>
<dbReference type="FunFam" id="3.40.50.1100:FF:000004">
    <property type="entry name" value="Tryptophan synthase beta chain"/>
    <property type="match status" value="1"/>
</dbReference>
<dbReference type="Gene3D" id="3.40.50.1100">
    <property type="match status" value="2"/>
</dbReference>
<dbReference type="HAMAP" id="MF_00133">
    <property type="entry name" value="Trp_synth_beta"/>
    <property type="match status" value="1"/>
</dbReference>
<dbReference type="InterPro" id="IPR006653">
    <property type="entry name" value="Trp_synth_b_CS"/>
</dbReference>
<dbReference type="InterPro" id="IPR006654">
    <property type="entry name" value="Trp_synth_beta"/>
</dbReference>
<dbReference type="InterPro" id="IPR023026">
    <property type="entry name" value="Trp_synth_beta/beta-like"/>
</dbReference>
<dbReference type="InterPro" id="IPR001926">
    <property type="entry name" value="TrpB-like_PALP"/>
</dbReference>
<dbReference type="InterPro" id="IPR036052">
    <property type="entry name" value="TrpB-like_PALP_sf"/>
</dbReference>
<dbReference type="NCBIfam" id="TIGR00263">
    <property type="entry name" value="trpB"/>
    <property type="match status" value="1"/>
</dbReference>
<dbReference type="PANTHER" id="PTHR48077:SF3">
    <property type="entry name" value="TRYPTOPHAN SYNTHASE"/>
    <property type="match status" value="1"/>
</dbReference>
<dbReference type="PANTHER" id="PTHR48077">
    <property type="entry name" value="TRYPTOPHAN SYNTHASE-RELATED"/>
    <property type="match status" value="1"/>
</dbReference>
<dbReference type="Pfam" id="PF00291">
    <property type="entry name" value="PALP"/>
    <property type="match status" value="1"/>
</dbReference>
<dbReference type="PIRSF" id="PIRSF001413">
    <property type="entry name" value="Trp_syn_beta"/>
    <property type="match status" value="1"/>
</dbReference>
<dbReference type="SUPFAM" id="SSF53686">
    <property type="entry name" value="Tryptophan synthase beta subunit-like PLP-dependent enzymes"/>
    <property type="match status" value="1"/>
</dbReference>
<dbReference type="PROSITE" id="PS00168">
    <property type="entry name" value="TRP_SYNTHASE_BETA"/>
    <property type="match status" value="1"/>
</dbReference>
<evidence type="ECO:0000250" key="1"/>
<evidence type="ECO:0000269" key="2">
    <source>
    </source>
</evidence>
<evidence type="ECO:0000269" key="3">
    <source>
    </source>
</evidence>
<evidence type="ECO:0000305" key="4"/>
<evidence type="ECO:0000305" key="5">
    <source>
    </source>
</evidence>
<evidence type="ECO:0007829" key="6">
    <source>
        <dbReference type="PDB" id="2DH5"/>
    </source>
</evidence>
<reference key="1">
    <citation type="journal article" date="1981" name="Nucleic Acids Res.">
        <title>The complete nucleotide sequence of the tryptophan operon of Escherichia coli.</title>
        <authorList>
            <person name="Yanofsky C."/>
            <person name="Platt T."/>
            <person name="Crawford I.P."/>
            <person name="Nichols B.P."/>
            <person name="Christie G.E."/>
            <person name="Horowitz H."/>
            <person name="van Cleemput M."/>
            <person name="Wu A.M."/>
        </authorList>
    </citation>
    <scope>NUCLEOTIDE SEQUENCE [GENOMIC DNA]</scope>
</reference>
<reference key="2">
    <citation type="journal article" date="1993" name="Genetics">
        <title>Molecular evolution of the Escherichia coli chromosome. IV. Sequence comparisons.</title>
        <authorList>
            <person name="Milkman R."/>
            <person name="Bridges M.M."/>
        </authorList>
    </citation>
    <scope>NUCLEOTIDE SEQUENCE [GENOMIC DNA]</scope>
</reference>
<reference key="3">
    <citation type="journal article" date="1996" name="DNA Res.">
        <title>A 570-kb DNA sequence of the Escherichia coli K-12 genome corresponding to the 28.0-40.1 min region on the linkage map.</title>
        <authorList>
            <person name="Aiba H."/>
            <person name="Baba T."/>
            <person name="Fujita K."/>
            <person name="Hayashi K."/>
            <person name="Inada T."/>
            <person name="Isono K."/>
            <person name="Itoh T."/>
            <person name="Kasai H."/>
            <person name="Kashimoto K."/>
            <person name="Kimura S."/>
            <person name="Kitakawa M."/>
            <person name="Kitagawa M."/>
            <person name="Makino K."/>
            <person name="Miki T."/>
            <person name="Mizobuchi K."/>
            <person name="Mori H."/>
            <person name="Mori T."/>
            <person name="Motomura K."/>
            <person name="Nakade S."/>
            <person name="Nakamura Y."/>
            <person name="Nashimoto H."/>
            <person name="Nishio Y."/>
            <person name="Oshima T."/>
            <person name="Saito N."/>
            <person name="Sampei G."/>
            <person name="Seki Y."/>
            <person name="Sivasundaram S."/>
            <person name="Tagami H."/>
            <person name="Takeda J."/>
            <person name="Takemoto K."/>
            <person name="Takeuchi Y."/>
            <person name="Wada C."/>
            <person name="Yamamoto Y."/>
            <person name="Horiuchi T."/>
        </authorList>
    </citation>
    <scope>NUCLEOTIDE SEQUENCE [LARGE SCALE GENOMIC DNA]</scope>
    <source>
        <strain>K12 / W3110 / ATCC 27325 / DSM 5911</strain>
    </source>
</reference>
<reference key="4">
    <citation type="journal article" date="1997" name="Science">
        <title>The complete genome sequence of Escherichia coli K-12.</title>
        <authorList>
            <person name="Blattner F.R."/>
            <person name="Plunkett G. III"/>
            <person name="Bloch C.A."/>
            <person name="Perna N.T."/>
            <person name="Burland V."/>
            <person name="Riley M."/>
            <person name="Collado-Vides J."/>
            <person name="Glasner J.D."/>
            <person name="Rode C.K."/>
            <person name="Mayhew G.F."/>
            <person name="Gregor J."/>
            <person name="Davis N.W."/>
            <person name="Kirkpatrick H.A."/>
            <person name="Goeden M.A."/>
            <person name="Rose D.J."/>
            <person name="Mau B."/>
            <person name="Shao Y."/>
        </authorList>
    </citation>
    <scope>NUCLEOTIDE SEQUENCE [LARGE SCALE GENOMIC DNA]</scope>
    <source>
        <strain>K12 / MG1655 / ATCC 47076</strain>
    </source>
</reference>
<reference key="5">
    <citation type="journal article" date="2006" name="Mol. Syst. Biol.">
        <title>Highly accurate genome sequences of Escherichia coli K-12 strains MG1655 and W3110.</title>
        <authorList>
            <person name="Hayashi K."/>
            <person name="Morooka N."/>
            <person name="Yamamoto Y."/>
            <person name="Fujita K."/>
            <person name="Isono K."/>
            <person name="Choi S."/>
            <person name="Ohtsubo E."/>
            <person name="Baba T."/>
            <person name="Wanner B.L."/>
            <person name="Mori H."/>
            <person name="Horiuchi T."/>
        </authorList>
    </citation>
    <scope>NUCLEOTIDE SEQUENCE [LARGE SCALE GENOMIC DNA]</scope>
    <source>
        <strain>K12 / W3110 / ATCC 27325 / DSM 5911</strain>
    </source>
</reference>
<reference key="6">
    <citation type="journal article" date="1980" name="J. Mol. Biol.">
        <title>Nucleotide sequence of the trpB gene in Escherichia coli and Salmonella typhimurium.</title>
        <authorList>
            <person name="Crawford I.P."/>
            <person name="Nichols B.P."/>
            <person name="Yanofsky C."/>
        </authorList>
    </citation>
    <scope>NUCLEOTIDE SEQUENCE [GENOMIC DNA] OF 1-394</scope>
</reference>
<reference key="7">
    <citation type="journal article" date="1980" name="J. Biol. Chem.">
        <title>Location of three active site residues in the NH2-terminal sequence of the beta 2 subunit tryptophan synthase from Escherichia coli.</title>
        <authorList>
            <person name="Higgins W."/>
            <person name="Miles E.W."/>
            <person name="Fairwell T."/>
        </authorList>
    </citation>
    <scope>PROTEIN SEQUENCE OF 2-100</scope>
    <scope>ACTIVE SITES</scope>
</reference>
<reference key="8">
    <citation type="journal article" date="1997" name="Electrophoresis">
        <title>Comparing the predicted and observed properties of proteins encoded in the genome of Escherichia coli K-12.</title>
        <authorList>
            <person name="Link A.J."/>
            <person name="Robison K."/>
            <person name="Church G.M."/>
        </authorList>
    </citation>
    <scope>PROTEIN SEQUENCE OF 2-13</scope>
    <source>
        <strain>K12 / EMG2</strain>
    </source>
</reference>
<reference key="9">
    <citation type="journal article" date="1971" name="J. Biol. Chem.">
        <title>Tryptophan synthetase beta 2 subunit. Primary structure of the pyridoxyl peptide from the Escherichia coli enzyme.</title>
        <authorList>
            <person name="Fluri R."/>
            <person name="Jackson L.E."/>
            <person name="Lee W.E."/>
            <person name="Crawford I.P."/>
        </authorList>
    </citation>
    <scope>PROTEIN SEQUENCE OF 77-99</scope>
</reference>
<reference key="10">
    <citation type="journal article" date="1972" name="J. Biol. Chem.">
        <title>Tryptophan synthetase beta 2 subunit. Application of genetic analysis to the study of primary structure.</title>
        <authorList>
            <person name="Cotton R.G.H."/>
            <person name="Crawford I.P."/>
        </authorList>
    </citation>
    <scope>PROTEIN SEQUENCE OF 363-397</scope>
</reference>
<reference key="11">
    <citation type="journal article" date="1992" name="J. Biol. Chem.">
        <title>Genetic and biochemical characterization of the trpB8 mutation of Escherichia coli tryptophan synthase. An amino acid switch at the sharp turn of the trypsin-sensitive 'hinge' region diminishes substrate binding and alters solubility.</title>
        <authorList>
            <person name="Zhao G.-P."/>
            <person name="Somerville R.L."/>
        </authorList>
    </citation>
    <scope>MUTANT TRPB8</scope>
</reference>
<reference key="12">
    <citation type="journal article" date="1997" name="Electrophoresis">
        <title>Escherichia coli proteome analysis using the gene-protein database.</title>
        <authorList>
            <person name="VanBogelen R.A."/>
            <person name="Abshire K.Z."/>
            <person name="Moldover B."/>
            <person name="Olson E.R."/>
            <person name="Neidhardt F.C."/>
        </authorList>
    </citation>
    <scope>IDENTIFICATION BY 2D-GEL</scope>
</reference>
<name>TRPB_ECOLI</name>